<name>PAL2_PEA</name>
<proteinExistence type="evidence at transcript level"/>
<feature type="chain" id="PRO_0000215404" description="Phenylalanine ammonia-lyase 2">
    <location>
        <begin position="1"/>
        <end position="724"/>
    </location>
</feature>
<feature type="active site" description="Proton donor/acceptor" evidence="3">
    <location>
        <position position="117"/>
    </location>
</feature>
<feature type="binding site" evidence="3">
    <location>
        <position position="268"/>
    </location>
    <ligand>
        <name>(E)-cinnamate</name>
        <dbReference type="ChEBI" id="CHEBI:15669"/>
    </ligand>
</feature>
<feature type="binding site" evidence="3">
    <location>
        <position position="356"/>
    </location>
    <ligand>
        <name>(E)-cinnamate</name>
        <dbReference type="ChEBI" id="CHEBI:15669"/>
    </ligand>
</feature>
<feature type="binding site" evidence="3">
    <location>
        <position position="362"/>
    </location>
    <ligand>
        <name>(E)-cinnamate</name>
        <dbReference type="ChEBI" id="CHEBI:15669"/>
    </ligand>
</feature>
<feature type="binding site" evidence="3">
    <location>
        <position position="392"/>
    </location>
    <ligand>
        <name>(E)-cinnamate</name>
        <dbReference type="ChEBI" id="CHEBI:15669"/>
    </ligand>
</feature>
<feature type="binding site" evidence="1">
    <location>
        <position position="464"/>
    </location>
    <ligand>
        <name>(E)-cinnamate</name>
        <dbReference type="ChEBI" id="CHEBI:15669"/>
    </ligand>
</feature>
<feature type="binding site" evidence="1">
    <location>
        <position position="492"/>
    </location>
    <ligand>
        <name>(E)-cinnamate</name>
        <dbReference type="ChEBI" id="CHEBI:15669"/>
    </ligand>
</feature>
<feature type="binding site" evidence="3">
    <location>
        <position position="495"/>
    </location>
    <ligand>
        <name>(E)-cinnamate</name>
        <dbReference type="ChEBI" id="CHEBI:15669"/>
    </ligand>
</feature>
<feature type="modified residue" description="2,3-didehydroalanine (Ser)" evidence="4">
    <location>
        <position position="211"/>
    </location>
</feature>
<feature type="cross-link" description="5-imidazolinone (Ala-Gly)" evidence="3">
    <location>
        <begin position="210"/>
        <end position="212"/>
    </location>
</feature>
<dbReference type="EC" id="4.3.1.24" evidence="2"/>
<dbReference type="EMBL" id="D10003">
    <property type="protein sequence ID" value="BAA00887.1"/>
    <property type="molecule type" value="Genomic_DNA"/>
</dbReference>
<dbReference type="SMR" id="Q04593"/>
<dbReference type="UniPathway" id="UPA00713">
    <property type="reaction ID" value="UER00725"/>
</dbReference>
<dbReference type="GO" id="GO:0005737">
    <property type="term" value="C:cytoplasm"/>
    <property type="evidence" value="ECO:0007669"/>
    <property type="project" value="UniProtKB-SubCell"/>
</dbReference>
<dbReference type="GO" id="GO:0045548">
    <property type="term" value="F:phenylalanine ammonia-lyase activity"/>
    <property type="evidence" value="ECO:0007669"/>
    <property type="project" value="UniProtKB-EC"/>
</dbReference>
<dbReference type="GO" id="GO:0009800">
    <property type="term" value="P:cinnamic acid biosynthetic process"/>
    <property type="evidence" value="ECO:0007669"/>
    <property type="project" value="UniProtKB-UniPathway"/>
</dbReference>
<dbReference type="GO" id="GO:0006559">
    <property type="term" value="P:L-phenylalanine catabolic process"/>
    <property type="evidence" value="ECO:0007669"/>
    <property type="project" value="UniProtKB-KW"/>
</dbReference>
<dbReference type="CDD" id="cd00332">
    <property type="entry name" value="PAL-HAL"/>
    <property type="match status" value="1"/>
</dbReference>
<dbReference type="FunFam" id="1.10.274.20:FF:000001">
    <property type="entry name" value="Phenylalanine ammonia-lyase"/>
    <property type="match status" value="1"/>
</dbReference>
<dbReference type="FunFam" id="1.10.275.10:FF:000009">
    <property type="entry name" value="Phenylalanine ammonia-lyase"/>
    <property type="match status" value="1"/>
</dbReference>
<dbReference type="FunFam" id="1.20.200.10:FF:000009">
    <property type="entry name" value="Phenylalanine ammonia-lyase"/>
    <property type="match status" value="1"/>
</dbReference>
<dbReference type="Gene3D" id="1.20.200.10">
    <property type="entry name" value="Fumarase/aspartase (Central domain)"/>
    <property type="match status" value="1"/>
</dbReference>
<dbReference type="Gene3D" id="1.10.275.10">
    <property type="entry name" value="Fumarase/aspartase (N-terminal domain)"/>
    <property type="match status" value="1"/>
</dbReference>
<dbReference type="Gene3D" id="1.10.274.20">
    <property type="entry name" value="Phenylalanine ammonia-lyase 1, domain 3"/>
    <property type="match status" value="1"/>
</dbReference>
<dbReference type="InterPro" id="IPR001106">
    <property type="entry name" value="Aromatic_Lyase"/>
</dbReference>
<dbReference type="InterPro" id="IPR024083">
    <property type="entry name" value="Fumarase/histidase_N"/>
</dbReference>
<dbReference type="InterPro" id="IPR008948">
    <property type="entry name" value="L-Aspartase-like"/>
</dbReference>
<dbReference type="InterPro" id="IPR022313">
    <property type="entry name" value="Phe/His_NH3-lyase_AS"/>
</dbReference>
<dbReference type="InterPro" id="IPR005922">
    <property type="entry name" value="Phe_NH3-lyase"/>
</dbReference>
<dbReference type="InterPro" id="IPR023144">
    <property type="entry name" value="Phe_NH3-lyase_shielding_dom_sf"/>
</dbReference>
<dbReference type="NCBIfam" id="TIGR01226">
    <property type="entry name" value="phe_am_lyase"/>
    <property type="match status" value="1"/>
</dbReference>
<dbReference type="PANTHER" id="PTHR10362">
    <property type="entry name" value="HISTIDINE AMMONIA-LYASE"/>
    <property type="match status" value="1"/>
</dbReference>
<dbReference type="Pfam" id="PF00221">
    <property type="entry name" value="Lyase_aromatic"/>
    <property type="match status" value="1"/>
</dbReference>
<dbReference type="SUPFAM" id="SSF48557">
    <property type="entry name" value="L-aspartase-like"/>
    <property type="match status" value="1"/>
</dbReference>
<dbReference type="PROSITE" id="PS00488">
    <property type="entry name" value="PAL_HISTIDASE"/>
    <property type="match status" value="1"/>
</dbReference>
<sequence length="724" mass="79009">MEAIGAAITKNNSGYDSFCLTNAKNNNIKVSDSDPLNWGVAAEAMKGSHLDEVKRMVDEYRKPVVRLGGETLTISQVAAIAAHDHGVKVELSESARAGVKASSDWVMESMNKGTDSYGVTTVHGATSHRRTKQGGALQKELIRFLNAGIFGNGSESTHTLPHTATRAAMLVRINTLLQGYSGIRFEILEAITKLINNNVTPCLLRGTITASGDLVPLSYIAGLLTGRPNSKAHGPSGEILNAREAFQSAGINDGFFELQPKEGLALVNGTAVGSGLASIVLFEANILAVLSEVLSAIFAEVMQGKPEFTDHLTHKLKHHPGQIEAAAIMEHILDGSAYVKAAKKLHEMDPLQKPKQDRYALRTSPQWLGPLIEVIRFSTKSIEREINSVNDNPLIDVSRNKALHGGNFQGTPIGVSMDNTRLALASIGKLLFAQFSELVNDFYNNGLPSNLSASRNPSLDYGFKGSEIAMASYCSELQYLANPVTTHVQSAEQHNQDVNSLGLISSRKTYEAIEILQLMSSTFLIALCQAIDLRHLEENLKNSVKNMVSHVAKRTLTTGINGELHPSRFCEKDLLRVVDREHVFSYIDDPCSATYPLMQKLRQVLVDHALVNGESEKNLNTSIFQKIATFEDELKTLLPKEVESARGAYENGNTTISNKIKECRSYPLYKFVREELGTSLLTGEKVISPGEECDKLFTAICQGKIIDPLLECLGDWNGAPLPIS</sequence>
<gene>
    <name type="primary">PAL2</name>
</gene>
<keyword id="KW-0963">Cytoplasm</keyword>
<keyword id="KW-0456">Lyase</keyword>
<keyword id="KW-0585">Phenylalanine catabolism</keyword>
<keyword id="KW-0587">Phenylpropanoid metabolism</keyword>
<reference key="1">
    <citation type="journal article" date="1992" name="Plant Cell Physiol.">
        <title>Phenylalanine ammonia-lyase genes from Pisum sativum: structure, organ-specific expression and regulation by fungal elicitor and suppressor.</title>
        <authorList>
            <person name="Yamada T."/>
            <person name="Tanaka Y."/>
            <person name="Sriprasertsak P."/>
            <person name="Kato H."/>
            <person name="Hashimoto T."/>
            <person name="Kawamata S."/>
            <person name="Ichinose Y."/>
            <person name="Kato H."/>
            <person name="Shiraishi T."/>
            <person name="Oku H."/>
        </authorList>
    </citation>
    <scope>NUCLEOTIDE SEQUENCE [GENOMIC DNA]</scope>
    <source>
        <strain>cv. Midoriusui</strain>
        <tissue>Epicotyl</tissue>
    </source>
</reference>
<protein>
    <recommendedName>
        <fullName>Phenylalanine ammonia-lyase 2</fullName>
        <ecNumber evidence="2">4.3.1.24</ecNumber>
    </recommendedName>
</protein>
<accession>Q04593</accession>
<organism>
    <name type="scientific">Pisum sativum</name>
    <name type="common">Garden pea</name>
    <name type="synonym">Lathyrus oleraceus</name>
    <dbReference type="NCBI Taxonomy" id="3888"/>
    <lineage>
        <taxon>Eukaryota</taxon>
        <taxon>Viridiplantae</taxon>
        <taxon>Streptophyta</taxon>
        <taxon>Embryophyta</taxon>
        <taxon>Tracheophyta</taxon>
        <taxon>Spermatophyta</taxon>
        <taxon>Magnoliopsida</taxon>
        <taxon>eudicotyledons</taxon>
        <taxon>Gunneridae</taxon>
        <taxon>Pentapetalae</taxon>
        <taxon>rosids</taxon>
        <taxon>fabids</taxon>
        <taxon>Fabales</taxon>
        <taxon>Fabaceae</taxon>
        <taxon>Papilionoideae</taxon>
        <taxon>50 kb inversion clade</taxon>
        <taxon>NPAAA clade</taxon>
        <taxon>Hologalegina</taxon>
        <taxon>IRL clade</taxon>
        <taxon>Fabeae</taxon>
        <taxon>Pisum</taxon>
    </lineage>
</organism>
<comment type="function">
    <text evidence="2">This is a key enzyme of plant metabolism catalyzing the first reaction in the biosynthesis from L-phenylalanine of a wide variety of natural products based on the phenylpropane skeleton.</text>
</comment>
<comment type="catalytic activity">
    <reaction evidence="2">
        <text>L-phenylalanine = (E)-cinnamate + NH4(+)</text>
        <dbReference type="Rhea" id="RHEA:21384"/>
        <dbReference type="ChEBI" id="CHEBI:15669"/>
        <dbReference type="ChEBI" id="CHEBI:28938"/>
        <dbReference type="ChEBI" id="CHEBI:58095"/>
        <dbReference type="EC" id="4.3.1.24"/>
    </reaction>
</comment>
<comment type="pathway">
    <text evidence="5">Phenylpropanoid metabolism; trans-cinnamate biosynthesis; trans-cinnamate from L-phenylalanine: step 1/1.</text>
</comment>
<comment type="subunit">
    <text evidence="2">Homotetramer.</text>
</comment>
<comment type="subcellular location">
    <subcellularLocation>
        <location evidence="5">Cytoplasm</location>
    </subcellularLocation>
</comment>
<comment type="tissue specificity">
    <text>Present at high levels in roots, with slightly higher amounts in roots with nodules than those without, and at moderate levels in stems.</text>
</comment>
<comment type="PTM">
    <text evidence="3">Contains an active site 4-methylidene-imidazol-5-one (MIO), which is formed autocatalytically by cyclization and dehydration of residues Ala-Ser-Gly.</text>
</comment>
<comment type="similarity">
    <text evidence="5">Belongs to the PAL/histidase family.</text>
</comment>
<evidence type="ECO:0000250" key="1">
    <source>
        <dbReference type="UniProtKB" id="P11544"/>
    </source>
</evidence>
<evidence type="ECO:0000250" key="2">
    <source>
        <dbReference type="UniProtKB" id="P24481"/>
    </source>
</evidence>
<evidence type="ECO:0000250" key="3">
    <source>
        <dbReference type="UniProtKB" id="Q68G84"/>
    </source>
</evidence>
<evidence type="ECO:0000255" key="4">
    <source>
        <dbReference type="PROSITE-ProRule" id="PRU10122"/>
    </source>
</evidence>
<evidence type="ECO:0000305" key="5"/>